<reference key="1">
    <citation type="journal article" date="2004" name="Nat. Genet.">
        <title>Reductive evolution suggested from the complete genome sequence of a plant-pathogenic phytoplasma.</title>
        <authorList>
            <person name="Oshima K."/>
            <person name="Kakizawa S."/>
            <person name="Nishigawa H."/>
            <person name="Jung H.-Y."/>
            <person name="Wei W."/>
            <person name="Suzuki S."/>
            <person name="Arashida R."/>
            <person name="Nakata D."/>
            <person name="Miyata S."/>
            <person name="Ugaki M."/>
            <person name="Namba S."/>
        </authorList>
    </citation>
    <scope>NUCLEOTIDE SEQUENCE [LARGE SCALE GENOMIC DNA]</scope>
    <source>
        <strain>OY-M</strain>
    </source>
</reference>
<protein>
    <recommendedName>
        <fullName evidence="1">Elongation factor P</fullName>
        <shortName evidence="1">EF-P</shortName>
    </recommendedName>
</protein>
<sequence length="189" mass="21591">MINTNDFKTGQTIKFNNQIYQILEFLHVKPGKGAAFVRTKLRNLRTGSVIDYTFNAGIKVQPALITKIKMQFLYALEDNYIFMNTQNYEQLEINKHQLKDFLKYLYEGLLVDIIFYENDEIVGITLPDKISIKVAYTEPGAKGDTKTNSLKDAALETGLVIKVPLFINIGEKIIINTETGLYLSRDNNK</sequence>
<evidence type="ECO:0000255" key="1">
    <source>
        <dbReference type="HAMAP-Rule" id="MF_00141"/>
    </source>
</evidence>
<comment type="function">
    <text evidence="1">Involved in peptide bond synthesis. Stimulates efficient translation and peptide-bond synthesis on native or reconstituted 70S ribosomes in vitro. Probably functions indirectly by altering the affinity of the ribosome for aminoacyl-tRNA, thus increasing their reactivity as acceptors for peptidyl transferase.</text>
</comment>
<comment type="pathway">
    <text evidence="1">Protein biosynthesis; polypeptide chain elongation.</text>
</comment>
<comment type="subcellular location">
    <subcellularLocation>
        <location evidence="1">Cytoplasm</location>
    </subcellularLocation>
</comment>
<comment type="similarity">
    <text evidence="1">Belongs to the elongation factor P family.</text>
</comment>
<name>EFP_ONYPE</name>
<gene>
    <name evidence="1" type="primary">efp</name>
    <name type="ordered locus">PAM_276</name>
</gene>
<accession>Q6YQU7</accession>
<keyword id="KW-0963">Cytoplasm</keyword>
<keyword id="KW-0251">Elongation factor</keyword>
<keyword id="KW-0648">Protein biosynthesis</keyword>
<proteinExistence type="inferred from homology"/>
<dbReference type="EMBL" id="AP006628">
    <property type="protein sequence ID" value="BAD04361.1"/>
    <property type="molecule type" value="Genomic_DNA"/>
</dbReference>
<dbReference type="SMR" id="Q6YQU7"/>
<dbReference type="STRING" id="262768.PAM_276"/>
<dbReference type="KEGG" id="poy:PAM_276"/>
<dbReference type="eggNOG" id="COG0231">
    <property type="taxonomic scope" value="Bacteria"/>
</dbReference>
<dbReference type="HOGENOM" id="CLU_074944_0_1_14"/>
<dbReference type="BioCyc" id="OYEL262768:G1G26-334-MONOMER"/>
<dbReference type="UniPathway" id="UPA00345"/>
<dbReference type="Proteomes" id="UP000002523">
    <property type="component" value="Chromosome"/>
</dbReference>
<dbReference type="GO" id="GO:0005737">
    <property type="term" value="C:cytoplasm"/>
    <property type="evidence" value="ECO:0007669"/>
    <property type="project" value="UniProtKB-SubCell"/>
</dbReference>
<dbReference type="GO" id="GO:0003746">
    <property type="term" value="F:translation elongation factor activity"/>
    <property type="evidence" value="ECO:0007669"/>
    <property type="project" value="UniProtKB-UniRule"/>
</dbReference>
<dbReference type="GO" id="GO:0043043">
    <property type="term" value="P:peptide biosynthetic process"/>
    <property type="evidence" value="ECO:0007669"/>
    <property type="project" value="InterPro"/>
</dbReference>
<dbReference type="CDD" id="cd04470">
    <property type="entry name" value="S1_EF-P_repeat_1"/>
    <property type="match status" value="1"/>
</dbReference>
<dbReference type="CDD" id="cd05794">
    <property type="entry name" value="S1_EF-P_repeat_2"/>
    <property type="match status" value="1"/>
</dbReference>
<dbReference type="FunFam" id="2.30.30.30:FF:000003">
    <property type="entry name" value="Elongation factor P"/>
    <property type="match status" value="1"/>
</dbReference>
<dbReference type="FunFam" id="2.40.50.140:FF:000004">
    <property type="entry name" value="Elongation factor P"/>
    <property type="match status" value="1"/>
</dbReference>
<dbReference type="Gene3D" id="2.30.30.30">
    <property type="match status" value="1"/>
</dbReference>
<dbReference type="Gene3D" id="2.40.50.140">
    <property type="entry name" value="Nucleic acid-binding proteins"/>
    <property type="match status" value="2"/>
</dbReference>
<dbReference type="HAMAP" id="MF_00141">
    <property type="entry name" value="EF_P"/>
    <property type="match status" value="1"/>
</dbReference>
<dbReference type="InterPro" id="IPR015365">
    <property type="entry name" value="Elong-fact-P_C"/>
</dbReference>
<dbReference type="InterPro" id="IPR012340">
    <property type="entry name" value="NA-bd_OB-fold"/>
</dbReference>
<dbReference type="InterPro" id="IPR014722">
    <property type="entry name" value="Rib_uL2_dom2"/>
</dbReference>
<dbReference type="InterPro" id="IPR020599">
    <property type="entry name" value="Transl_elong_fac_P/YeiP"/>
</dbReference>
<dbReference type="InterPro" id="IPR013185">
    <property type="entry name" value="Transl_elong_KOW-like"/>
</dbReference>
<dbReference type="InterPro" id="IPR001059">
    <property type="entry name" value="Transl_elong_P/YeiP_cen"/>
</dbReference>
<dbReference type="InterPro" id="IPR013852">
    <property type="entry name" value="Transl_elong_P/YeiP_CS"/>
</dbReference>
<dbReference type="InterPro" id="IPR011768">
    <property type="entry name" value="Transl_elongation_fac_P"/>
</dbReference>
<dbReference type="InterPro" id="IPR008991">
    <property type="entry name" value="Translation_prot_SH3-like_sf"/>
</dbReference>
<dbReference type="NCBIfam" id="TIGR00038">
    <property type="entry name" value="efp"/>
    <property type="match status" value="1"/>
</dbReference>
<dbReference type="NCBIfam" id="NF001810">
    <property type="entry name" value="PRK00529.1"/>
    <property type="match status" value="1"/>
</dbReference>
<dbReference type="PANTHER" id="PTHR30053">
    <property type="entry name" value="ELONGATION FACTOR P"/>
    <property type="match status" value="1"/>
</dbReference>
<dbReference type="PANTHER" id="PTHR30053:SF12">
    <property type="entry name" value="ELONGATION FACTOR P (EF-P) FAMILY PROTEIN"/>
    <property type="match status" value="1"/>
</dbReference>
<dbReference type="Pfam" id="PF01132">
    <property type="entry name" value="EFP"/>
    <property type="match status" value="1"/>
</dbReference>
<dbReference type="Pfam" id="PF08207">
    <property type="entry name" value="EFP_N"/>
    <property type="match status" value="1"/>
</dbReference>
<dbReference type="Pfam" id="PF09285">
    <property type="entry name" value="Elong-fact-P_C"/>
    <property type="match status" value="1"/>
</dbReference>
<dbReference type="PIRSF" id="PIRSF005901">
    <property type="entry name" value="EF-P"/>
    <property type="match status" value="1"/>
</dbReference>
<dbReference type="SMART" id="SM01185">
    <property type="entry name" value="EFP"/>
    <property type="match status" value="1"/>
</dbReference>
<dbReference type="SMART" id="SM00841">
    <property type="entry name" value="Elong-fact-P_C"/>
    <property type="match status" value="1"/>
</dbReference>
<dbReference type="SUPFAM" id="SSF50249">
    <property type="entry name" value="Nucleic acid-binding proteins"/>
    <property type="match status" value="2"/>
</dbReference>
<dbReference type="SUPFAM" id="SSF50104">
    <property type="entry name" value="Translation proteins SH3-like domain"/>
    <property type="match status" value="1"/>
</dbReference>
<dbReference type="PROSITE" id="PS01275">
    <property type="entry name" value="EFP"/>
    <property type="match status" value="1"/>
</dbReference>
<feature type="chain" id="PRO_0000094299" description="Elongation factor P">
    <location>
        <begin position="1"/>
        <end position="189"/>
    </location>
</feature>
<organism>
    <name type="scientific">Onion yellows phytoplasma (strain OY-M)</name>
    <dbReference type="NCBI Taxonomy" id="262768"/>
    <lineage>
        <taxon>Bacteria</taxon>
        <taxon>Bacillati</taxon>
        <taxon>Mycoplasmatota</taxon>
        <taxon>Mollicutes</taxon>
        <taxon>Acholeplasmatales</taxon>
        <taxon>Acholeplasmataceae</taxon>
        <taxon>Candidatus Phytoplasma</taxon>
        <taxon>16SrI (Aster yellows group)</taxon>
    </lineage>
</organism>